<keyword id="KW-0687">Ribonucleoprotein</keyword>
<keyword id="KW-0689">Ribosomal protein</keyword>
<keyword id="KW-0694">RNA-binding</keyword>
<keyword id="KW-0699">rRNA-binding</keyword>
<sequence>MAISKEKKNEIIAQYARHEGDTGSVEVQVAVLTWEINHLNSHIKEHKKDHATYRGLMKKIGHRRNLLAYLRRTDVNRYRELIQSLGLRR</sequence>
<dbReference type="EMBL" id="AM295007">
    <property type="protein sequence ID" value="CAM30959.1"/>
    <property type="molecule type" value="Genomic_DNA"/>
</dbReference>
<dbReference type="RefSeq" id="WP_002982634.1">
    <property type="nucleotide sequence ID" value="NC_009332.1"/>
</dbReference>
<dbReference type="SMR" id="A2RGH7"/>
<dbReference type="KEGG" id="spf:SpyM51638"/>
<dbReference type="HOGENOM" id="CLU_148518_0_0_9"/>
<dbReference type="GO" id="GO:0022627">
    <property type="term" value="C:cytosolic small ribosomal subunit"/>
    <property type="evidence" value="ECO:0007669"/>
    <property type="project" value="TreeGrafter"/>
</dbReference>
<dbReference type="GO" id="GO:0019843">
    <property type="term" value="F:rRNA binding"/>
    <property type="evidence" value="ECO:0007669"/>
    <property type="project" value="UniProtKB-UniRule"/>
</dbReference>
<dbReference type="GO" id="GO:0003735">
    <property type="term" value="F:structural constituent of ribosome"/>
    <property type="evidence" value="ECO:0007669"/>
    <property type="project" value="InterPro"/>
</dbReference>
<dbReference type="GO" id="GO:0006412">
    <property type="term" value="P:translation"/>
    <property type="evidence" value="ECO:0007669"/>
    <property type="project" value="UniProtKB-UniRule"/>
</dbReference>
<dbReference type="CDD" id="cd00353">
    <property type="entry name" value="Ribosomal_S15p_S13e"/>
    <property type="match status" value="1"/>
</dbReference>
<dbReference type="FunFam" id="1.10.287.10:FF:000002">
    <property type="entry name" value="30S ribosomal protein S15"/>
    <property type="match status" value="1"/>
</dbReference>
<dbReference type="Gene3D" id="6.10.250.3130">
    <property type="match status" value="1"/>
</dbReference>
<dbReference type="Gene3D" id="1.10.287.10">
    <property type="entry name" value="S15/NS1, RNA-binding"/>
    <property type="match status" value="1"/>
</dbReference>
<dbReference type="HAMAP" id="MF_01343_B">
    <property type="entry name" value="Ribosomal_uS15_B"/>
    <property type="match status" value="1"/>
</dbReference>
<dbReference type="InterPro" id="IPR000589">
    <property type="entry name" value="Ribosomal_uS15"/>
</dbReference>
<dbReference type="InterPro" id="IPR005290">
    <property type="entry name" value="Ribosomal_uS15_bac-type"/>
</dbReference>
<dbReference type="InterPro" id="IPR009068">
    <property type="entry name" value="uS15_NS1_RNA-bd_sf"/>
</dbReference>
<dbReference type="NCBIfam" id="TIGR00952">
    <property type="entry name" value="S15_bact"/>
    <property type="match status" value="1"/>
</dbReference>
<dbReference type="PANTHER" id="PTHR23321">
    <property type="entry name" value="RIBOSOMAL PROTEIN S15, BACTERIAL AND ORGANELLAR"/>
    <property type="match status" value="1"/>
</dbReference>
<dbReference type="PANTHER" id="PTHR23321:SF26">
    <property type="entry name" value="SMALL RIBOSOMAL SUBUNIT PROTEIN US15M"/>
    <property type="match status" value="1"/>
</dbReference>
<dbReference type="Pfam" id="PF00312">
    <property type="entry name" value="Ribosomal_S15"/>
    <property type="match status" value="1"/>
</dbReference>
<dbReference type="SMART" id="SM01387">
    <property type="entry name" value="Ribosomal_S15"/>
    <property type="match status" value="1"/>
</dbReference>
<dbReference type="SUPFAM" id="SSF47060">
    <property type="entry name" value="S15/NS1 RNA-binding domain"/>
    <property type="match status" value="1"/>
</dbReference>
<dbReference type="PROSITE" id="PS00362">
    <property type="entry name" value="RIBOSOMAL_S15"/>
    <property type="match status" value="1"/>
</dbReference>
<comment type="function">
    <text evidence="1">One of the primary rRNA binding proteins, it binds directly to 16S rRNA where it helps nucleate assembly of the platform of the 30S subunit by binding and bridging several RNA helices of the 16S rRNA.</text>
</comment>
<comment type="function">
    <text evidence="1">Forms an intersubunit bridge (bridge B4) with the 23S rRNA of the 50S subunit in the ribosome.</text>
</comment>
<comment type="subunit">
    <text evidence="1">Part of the 30S ribosomal subunit. Forms a bridge to the 50S subunit in the 70S ribosome, contacting the 23S rRNA.</text>
</comment>
<comment type="similarity">
    <text evidence="1">Belongs to the universal ribosomal protein uS15 family.</text>
</comment>
<gene>
    <name evidence="1" type="primary">rpsO</name>
    <name type="ordered locus">SpyM51638</name>
</gene>
<name>RS15_STRPG</name>
<organism>
    <name type="scientific">Streptococcus pyogenes serotype M5 (strain Manfredo)</name>
    <dbReference type="NCBI Taxonomy" id="160491"/>
    <lineage>
        <taxon>Bacteria</taxon>
        <taxon>Bacillati</taxon>
        <taxon>Bacillota</taxon>
        <taxon>Bacilli</taxon>
        <taxon>Lactobacillales</taxon>
        <taxon>Streptococcaceae</taxon>
        <taxon>Streptococcus</taxon>
    </lineage>
</organism>
<protein>
    <recommendedName>
        <fullName evidence="1">Small ribosomal subunit protein uS15</fullName>
    </recommendedName>
    <alternativeName>
        <fullName evidence="2">30S ribosomal protein S15</fullName>
    </alternativeName>
</protein>
<feature type="chain" id="PRO_1000054881" description="Small ribosomal subunit protein uS15">
    <location>
        <begin position="1"/>
        <end position="89"/>
    </location>
</feature>
<accession>A2RGH7</accession>
<evidence type="ECO:0000255" key="1">
    <source>
        <dbReference type="HAMAP-Rule" id="MF_01343"/>
    </source>
</evidence>
<evidence type="ECO:0000305" key="2"/>
<proteinExistence type="inferred from homology"/>
<reference key="1">
    <citation type="journal article" date="2007" name="J. Bacteriol.">
        <title>Complete genome of acute rheumatic fever-associated serotype M5 Streptococcus pyogenes strain Manfredo.</title>
        <authorList>
            <person name="Holden M.T.G."/>
            <person name="Scott A."/>
            <person name="Cherevach I."/>
            <person name="Chillingworth T."/>
            <person name="Churcher C."/>
            <person name="Cronin A."/>
            <person name="Dowd L."/>
            <person name="Feltwell T."/>
            <person name="Hamlin N."/>
            <person name="Holroyd S."/>
            <person name="Jagels K."/>
            <person name="Moule S."/>
            <person name="Mungall K."/>
            <person name="Quail M.A."/>
            <person name="Price C."/>
            <person name="Rabbinowitsch E."/>
            <person name="Sharp S."/>
            <person name="Skelton J."/>
            <person name="Whitehead S."/>
            <person name="Barrell B.G."/>
            <person name="Kehoe M."/>
            <person name="Parkhill J."/>
        </authorList>
    </citation>
    <scope>NUCLEOTIDE SEQUENCE [LARGE SCALE GENOMIC DNA]</scope>
    <source>
        <strain>Manfredo</strain>
    </source>
</reference>